<name>DGTL1_BARHE</name>
<evidence type="ECO:0000255" key="1">
    <source>
        <dbReference type="HAMAP-Rule" id="MF_01212"/>
    </source>
</evidence>
<evidence type="ECO:0000255" key="2">
    <source>
        <dbReference type="PROSITE-ProRule" id="PRU01175"/>
    </source>
</evidence>
<dbReference type="EMBL" id="BX897699">
    <property type="protein sequence ID" value="CAF27789.1"/>
    <property type="molecule type" value="Genomic_DNA"/>
</dbReference>
<dbReference type="RefSeq" id="WP_011180863.1">
    <property type="nucleotide sequence ID" value="NZ_LRIJ02000001.1"/>
</dbReference>
<dbReference type="SMR" id="Q6G317"/>
<dbReference type="PaxDb" id="283166-BH09970"/>
<dbReference type="EnsemblBacteria" id="CAF27789">
    <property type="protein sequence ID" value="CAF27789"/>
    <property type="gene ID" value="BH09970"/>
</dbReference>
<dbReference type="KEGG" id="bhe:BH09970"/>
<dbReference type="eggNOG" id="COG0232">
    <property type="taxonomic scope" value="Bacteria"/>
</dbReference>
<dbReference type="OrthoDB" id="9803619at2"/>
<dbReference type="Proteomes" id="UP000000421">
    <property type="component" value="Chromosome"/>
</dbReference>
<dbReference type="GO" id="GO:0008832">
    <property type="term" value="F:dGTPase activity"/>
    <property type="evidence" value="ECO:0007669"/>
    <property type="project" value="TreeGrafter"/>
</dbReference>
<dbReference type="GO" id="GO:0006203">
    <property type="term" value="P:dGTP catabolic process"/>
    <property type="evidence" value="ECO:0007669"/>
    <property type="project" value="TreeGrafter"/>
</dbReference>
<dbReference type="CDD" id="cd00077">
    <property type="entry name" value="HDc"/>
    <property type="match status" value="1"/>
</dbReference>
<dbReference type="Gene3D" id="1.10.3210.10">
    <property type="entry name" value="Hypothetical protein af1432"/>
    <property type="match status" value="1"/>
</dbReference>
<dbReference type="HAMAP" id="MF_01212">
    <property type="entry name" value="dGTPase_type2"/>
    <property type="match status" value="1"/>
</dbReference>
<dbReference type="InterPro" id="IPR006261">
    <property type="entry name" value="dGTPase"/>
</dbReference>
<dbReference type="InterPro" id="IPR050135">
    <property type="entry name" value="dGTPase-like"/>
</dbReference>
<dbReference type="InterPro" id="IPR023023">
    <property type="entry name" value="dNTPase_2"/>
</dbReference>
<dbReference type="InterPro" id="IPR003607">
    <property type="entry name" value="HD/PDEase_dom"/>
</dbReference>
<dbReference type="InterPro" id="IPR006674">
    <property type="entry name" value="HD_domain"/>
</dbReference>
<dbReference type="InterPro" id="IPR026875">
    <property type="entry name" value="PHydrolase_assoc_dom"/>
</dbReference>
<dbReference type="NCBIfam" id="TIGR01353">
    <property type="entry name" value="dGTP_triPase"/>
    <property type="match status" value="1"/>
</dbReference>
<dbReference type="NCBIfam" id="NF002326">
    <property type="entry name" value="PRK01286.1-1"/>
    <property type="match status" value="1"/>
</dbReference>
<dbReference type="NCBIfam" id="NF002328">
    <property type="entry name" value="PRK01286.1-3"/>
    <property type="match status" value="1"/>
</dbReference>
<dbReference type="PANTHER" id="PTHR11373:SF43">
    <property type="entry name" value="DEOXYGUANOSINETRIPHOSPHATE TRIPHOSPHOHYDROLASE-LIKE PROTEIN"/>
    <property type="match status" value="1"/>
</dbReference>
<dbReference type="PANTHER" id="PTHR11373">
    <property type="entry name" value="DEOXYNUCLEOSIDE TRIPHOSPHATE TRIPHOSPHOHYDROLASE"/>
    <property type="match status" value="1"/>
</dbReference>
<dbReference type="Pfam" id="PF01966">
    <property type="entry name" value="HD"/>
    <property type="match status" value="1"/>
</dbReference>
<dbReference type="Pfam" id="PF13286">
    <property type="entry name" value="HD_assoc"/>
    <property type="match status" value="1"/>
</dbReference>
<dbReference type="SMART" id="SM00471">
    <property type="entry name" value="HDc"/>
    <property type="match status" value="1"/>
</dbReference>
<dbReference type="SUPFAM" id="SSF109604">
    <property type="entry name" value="HD-domain/PDEase-like"/>
    <property type="match status" value="1"/>
</dbReference>
<dbReference type="PROSITE" id="PS51831">
    <property type="entry name" value="HD"/>
    <property type="match status" value="1"/>
</dbReference>
<reference key="1">
    <citation type="journal article" date="2004" name="Proc. Natl. Acad. Sci. U.S.A.">
        <title>The louse-borne human pathogen Bartonella quintana is a genomic derivative of the zoonotic agent Bartonella henselae.</title>
        <authorList>
            <person name="Alsmark U.C.M."/>
            <person name="Frank A.C."/>
            <person name="Karlberg E.O."/>
            <person name="Legault B.-A."/>
            <person name="Ardell D.H."/>
            <person name="Canbaeck B."/>
            <person name="Eriksson A.-S."/>
            <person name="Naeslund A.K."/>
            <person name="Handley S.A."/>
            <person name="Huvet M."/>
            <person name="La Scola B."/>
            <person name="Holmberg M."/>
            <person name="Andersson S.G.E."/>
        </authorList>
    </citation>
    <scope>NUCLEOTIDE SEQUENCE [LARGE SCALE GENOMIC DNA]</scope>
    <source>
        <strain>ATCC 49882 / DSM 28221 / CCUG 30454 / Houston 1</strain>
    </source>
</reference>
<accession>Q6G317</accession>
<proteinExistence type="inferred from homology"/>
<organism>
    <name type="scientific">Bartonella henselae (strain ATCC 49882 / DSM 28221 / CCUG 30454 / Houston 1)</name>
    <name type="common">Rochalimaea henselae</name>
    <dbReference type="NCBI Taxonomy" id="283166"/>
    <lineage>
        <taxon>Bacteria</taxon>
        <taxon>Pseudomonadati</taxon>
        <taxon>Pseudomonadota</taxon>
        <taxon>Alphaproteobacteria</taxon>
        <taxon>Hyphomicrobiales</taxon>
        <taxon>Bartonellaceae</taxon>
        <taxon>Bartonella</taxon>
    </lineage>
</organism>
<comment type="similarity">
    <text evidence="1">Belongs to the dGTPase family. Type 2 subfamily.</text>
</comment>
<protein>
    <recommendedName>
        <fullName evidence="1">Deoxyguanosinetriphosphate triphosphohydrolase-like protein</fullName>
    </recommendedName>
</protein>
<feature type="chain" id="PRO_1000085567" description="Deoxyguanosinetriphosphate triphosphohydrolase-like protein">
    <location>
        <begin position="1"/>
        <end position="400"/>
    </location>
</feature>
<feature type="domain" description="HD" evidence="2">
    <location>
        <begin position="73"/>
        <end position="215"/>
    </location>
</feature>
<sequence>MDKSKINFNYQSRAVYSANPQTSRGRLFHETMNTLRSPFQRDRDRIIHSNAFRRLKHKTQVFIADESDHYRTRLTHSIEVSQIARTLARALYLDEDLAESIALVHDFGHTPFGHAGEDALNEAMAPYGGFDHNAQALRIVTKLEQRYANFDGLNLTWETLEGLVKHNGPLLGPYAKNKDIPIDILQYNAKQDLQLNCFAGLEAQCAAIADDIAYNAHDVDDGLRSQFLTLDQFEQVSLTAALLNDIKKEHPQLDQTRRGYTLVRRQIKTMVEDVIKQSQENLARVKPKSISDVHQAEQTIVTFSPTMAVYERELKDFLFKNLYYHDQVLNRRNAAKRIVQKLFECYYENPDVMPENWHNKTAHLTNQELARLIADFLSGMTDHYALREYQHLFDCTDNFI</sequence>
<gene>
    <name type="ordered locus">BH09970</name>
</gene>
<keyword id="KW-0378">Hydrolase</keyword>